<sequence length="572" mass="61819">MALTIPRSQYVATYGPTVGDKVRLGDTDLWATIEQDFLTKGDECKFGGGKSVRDGMAQSSTATRDNPNVLDFALTNVMIIDAKLGIIKADIGIRDGRIVGIGQAGNPDTMDNVTPNMIIGASTEVHNGAHLIATAGGIDTHIHWICPQQAQHAIENGITTMIGGGSGPADGTHATTCTPGKFNIERMFQACEALPVNIGFFGKGNCSMLEPLKEQVVAGALGLKIHEDWGATPAVIDAALKVADEMDVQVAIHTDTLNESGFLEDTMKAINGRVIHTFHTEGAGGGHAPDIIKAAMYPNVLPASTNPTRPFTVNTIDEHLDMLMVCHHLDKRVPEDVAFADSRIRPETIAAEDILHDMGVFSIMSSDSQAMGRVGEVVTRTWQTADKMKAQRGALGDEGNDNFRIKRYIAKYTINPAIAHGISQYVGSLEVGKLADIVLWKPQFFGVKPEFVMKKGFISFAKMGDPNASIPTPQPVFYRPMFGANAKANTESAVYFVSQASVDANIKAQYGIQKETLAVKGCRDVGKKDLVHNNATPEITVDPERYEVRVDGEHITCEPATKVPLAQRYFLF</sequence>
<name>URE1_ACTP7</name>
<reference key="1">
    <citation type="submission" date="2008-06" db="EMBL/GenBank/DDBJ databases">
        <title>Genome and proteome analysis of A. pleuropneumoniae serotype 7.</title>
        <authorList>
            <person name="Linke B."/>
            <person name="Buettner F."/>
            <person name="Martinez-Arias R."/>
            <person name="Goesmann A."/>
            <person name="Baltes N."/>
            <person name="Tegetmeyer H."/>
            <person name="Singh M."/>
            <person name="Gerlach G.F."/>
        </authorList>
    </citation>
    <scope>NUCLEOTIDE SEQUENCE [LARGE SCALE GENOMIC DNA]</scope>
    <source>
        <strain>AP76</strain>
    </source>
</reference>
<dbReference type="EC" id="3.5.1.5" evidence="1"/>
<dbReference type="EMBL" id="CP001091">
    <property type="protein sequence ID" value="ACE62330.1"/>
    <property type="molecule type" value="Genomic_DNA"/>
</dbReference>
<dbReference type="RefSeq" id="WP_005618089.1">
    <property type="nucleotide sequence ID" value="NC_010939.1"/>
</dbReference>
<dbReference type="SMR" id="B3H2L3"/>
<dbReference type="MEROPS" id="M38.982"/>
<dbReference type="KEGG" id="apa:APP7_1678"/>
<dbReference type="HOGENOM" id="CLU_000980_0_0_6"/>
<dbReference type="UniPathway" id="UPA00258">
    <property type="reaction ID" value="UER00370"/>
</dbReference>
<dbReference type="Proteomes" id="UP000001226">
    <property type="component" value="Chromosome"/>
</dbReference>
<dbReference type="GO" id="GO:0005737">
    <property type="term" value="C:cytoplasm"/>
    <property type="evidence" value="ECO:0007669"/>
    <property type="project" value="UniProtKB-SubCell"/>
</dbReference>
<dbReference type="GO" id="GO:0016151">
    <property type="term" value="F:nickel cation binding"/>
    <property type="evidence" value="ECO:0007669"/>
    <property type="project" value="UniProtKB-UniRule"/>
</dbReference>
<dbReference type="GO" id="GO:0009039">
    <property type="term" value="F:urease activity"/>
    <property type="evidence" value="ECO:0007669"/>
    <property type="project" value="UniProtKB-UniRule"/>
</dbReference>
<dbReference type="GO" id="GO:0043419">
    <property type="term" value="P:urea catabolic process"/>
    <property type="evidence" value="ECO:0007669"/>
    <property type="project" value="UniProtKB-UniRule"/>
</dbReference>
<dbReference type="CDD" id="cd00375">
    <property type="entry name" value="Urease_alpha"/>
    <property type="match status" value="1"/>
</dbReference>
<dbReference type="Gene3D" id="3.20.20.140">
    <property type="entry name" value="Metal-dependent hydrolases"/>
    <property type="match status" value="1"/>
</dbReference>
<dbReference type="Gene3D" id="2.30.40.10">
    <property type="entry name" value="Urease, subunit C, domain 1"/>
    <property type="match status" value="1"/>
</dbReference>
<dbReference type="HAMAP" id="MF_01953">
    <property type="entry name" value="Urease_alpha"/>
    <property type="match status" value="1"/>
</dbReference>
<dbReference type="InterPro" id="IPR006680">
    <property type="entry name" value="Amidohydro-rel"/>
</dbReference>
<dbReference type="InterPro" id="IPR011059">
    <property type="entry name" value="Metal-dep_hydrolase_composite"/>
</dbReference>
<dbReference type="InterPro" id="IPR032466">
    <property type="entry name" value="Metal_Hydrolase"/>
</dbReference>
<dbReference type="InterPro" id="IPR011612">
    <property type="entry name" value="Urease_alpha_N_dom"/>
</dbReference>
<dbReference type="InterPro" id="IPR050112">
    <property type="entry name" value="Urease_alpha_subunit"/>
</dbReference>
<dbReference type="InterPro" id="IPR017950">
    <property type="entry name" value="Urease_AS"/>
</dbReference>
<dbReference type="InterPro" id="IPR005848">
    <property type="entry name" value="Urease_asu"/>
</dbReference>
<dbReference type="InterPro" id="IPR017951">
    <property type="entry name" value="Urease_asu_c"/>
</dbReference>
<dbReference type="InterPro" id="IPR029754">
    <property type="entry name" value="Urease_Ni-bd"/>
</dbReference>
<dbReference type="NCBIfam" id="NF009686">
    <property type="entry name" value="PRK13207.1"/>
    <property type="match status" value="1"/>
</dbReference>
<dbReference type="NCBIfam" id="TIGR01792">
    <property type="entry name" value="urease_alph"/>
    <property type="match status" value="1"/>
</dbReference>
<dbReference type="PANTHER" id="PTHR43440">
    <property type="entry name" value="UREASE"/>
    <property type="match status" value="1"/>
</dbReference>
<dbReference type="PANTHER" id="PTHR43440:SF1">
    <property type="entry name" value="UREASE"/>
    <property type="match status" value="1"/>
</dbReference>
<dbReference type="Pfam" id="PF01979">
    <property type="entry name" value="Amidohydro_1"/>
    <property type="match status" value="1"/>
</dbReference>
<dbReference type="Pfam" id="PF00449">
    <property type="entry name" value="Urease_alpha"/>
    <property type="match status" value="1"/>
</dbReference>
<dbReference type="PRINTS" id="PR01752">
    <property type="entry name" value="UREASE"/>
</dbReference>
<dbReference type="SUPFAM" id="SSF51338">
    <property type="entry name" value="Composite domain of metallo-dependent hydrolases"/>
    <property type="match status" value="2"/>
</dbReference>
<dbReference type="SUPFAM" id="SSF51556">
    <property type="entry name" value="Metallo-dependent hydrolases"/>
    <property type="match status" value="1"/>
</dbReference>
<dbReference type="PROSITE" id="PS01120">
    <property type="entry name" value="UREASE_1"/>
    <property type="match status" value="1"/>
</dbReference>
<dbReference type="PROSITE" id="PS00145">
    <property type="entry name" value="UREASE_2"/>
    <property type="match status" value="1"/>
</dbReference>
<dbReference type="PROSITE" id="PS51368">
    <property type="entry name" value="UREASE_3"/>
    <property type="match status" value="1"/>
</dbReference>
<organism>
    <name type="scientific">Actinobacillus pleuropneumoniae serotype 7 (strain AP76)</name>
    <dbReference type="NCBI Taxonomy" id="537457"/>
    <lineage>
        <taxon>Bacteria</taxon>
        <taxon>Pseudomonadati</taxon>
        <taxon>Pseudomonadota</taxon>
        <taxon>Gammaproteobacteria</taxon>
        <taxon>Pasteurellales</taxon>
        <taxon>Pasteurellaceae</taxon>
        <taxon>Actinobacillus</taxon>
    </lineage>
</organism>
<accession>B3H2L3</accession>
<protein>
    <recommendedName>
        <fullName evidence="1">Urease subunit alpha</fullName>
        <ecNumber evidence="1">3.5.1.5</ecNumber>
    </recommendedName>
    <alternativeName>
        <fullName evidence="1">Urea amidohydrolase subunit alpha</fullName>
    </alternativeName>
</protein>
<gene>
    <name evidence="1" type="primary">ureC</name>
    <name type="ordered locus">APP7_1678</name>
</gene>
<keyword id="KW-0963">Cytoplasm</keyword>
<keyword id="KW-0378">Hydrolase</keyword>
<keyword id="KW-0479">Metal-binding</keyword>
<keyword id="KW-0533">Nickel</keyword>
<feature type="chain" id="PRO_1000188855" description="Urease subunit alpha">
    <location>
        <begin position="1"/>
        <end position="572"/>
    </location>
</feature>
<feature type="domain" description="Urease" evidence="1">
    <location>
        <begin position="136"/>
        <end position="572"/>
    </location>
</feature>
<feature type="active site" description="Proton donor" evidence="1">
    <location>
        <position position="327"/>
    </location>
</feature>
<feature type="binding site" evidence="1">
    <location>
        <position position="141"/>
    </location>
    <ligand>
        <name>Ni(2+)</name>
        <dbReference type="ChEBI" id="CHEBI:49786"/>
        <label>1</label>
    </ligand>
</feature>
<feature type="binding site" evidence="1">
    <location>
        <position position="143"/>
    </location>
    <ligand>
        <name>Ni(2+)</name>
        <dbReference type="ChEBI" id="CHEBI:49786"/>
        <label>1</label>
    </ligand>
</feature>
<feature type="binding site" description="via carbamate group" evidence="1">
    <location>
        <position position="224"/>
    </location>
    <ligand>
        <name>Ni(2+)</name>
        <dbReference type="ChEBI" id="CHEBI:49786"/>
        <label>1</label>
    </ligand>
</feature>
<feature type="binding site" description="via carbamate group" evidence="1">
    <location>
        <position position="224"/>
    </location>
    <ligand>
        <name>Ni(2+)</name>
        <dbReference type="ChEBI" id="CHEBI:49786"/>
        <label>2</label>
    </ligand>
</feature>
<feature type="binding site" evidence="1">
    <location>
        <position position="226"/>
    </location>
    <ligand>
        <name>substrate</name>
    </ligand>
</feature>
<feature type="binding site" evidence="1">
    <location>
        <position position="253"/>
    </location>
    <ligand>
        <name>Ni(2+)</name>
        <dbReference type="ChEBI" id="CHEBI:49786"/>
        <label>2</label>
    </ligand>
</feature>
<feature type="binding site" evidence="1">
    <location>
        <position position="279"/>
    </location>
    <ligand>
        <name>Ni(2+)</name>
        <dbReference type="ChEBI" id="CHEBI:49786"/>
        <label>2</label>
    </ligand>
</feature>
<feature type="binding site" evidence="1">
    <location>
        <position position="367"/>
    </location>
    <ligand>
        <name>Ni(2+)</name>
        <dbReference type="ChEBI" id="CHEBI:49786"/>
        <label>1</label>
    </ligand>
</feature>
<feature type="modified residue" description="N6-carboxylysine" evidence="1">
    <location>
        <position position="224"/>
    </location>
</feature>
<proteinExistence type="inferred from homology"/>
<comment type="catalytic activity">
    <reaction evidence="1">
        <text>urea + 2 H2O + H(+) = hydrogencarbonate + 2 NH4(+)</text>
        <dbReference type="Rhea" id="RHEA:20557"/>
        <dbReference type="ChEBI" id="CHEBI:15377"/>
        <dbReference type="ChEBI" id="CHEBI:15378"/>
        <dbReference type="ChEBI" id="CHEBI:16199"/>
        <dbReference type="ChEBI" id="CHEBI:17544"/>
        <dbReference type="ChEBI" id="CHEBI:28938"/>
        <dbReference type="EC" id="3.5.1.5"/>
    </reaction>
</comment>
<comment type="cofactor">
    <cofactor evidence="1">
        <name>Ni cation</name>
        <dbReference type="ChEBI" id="CHEBI:25516"/>
    </cofactor>
    <text evidence="1">Binds 2 nickel ions per subunit.</text>
</comment>
<comment type="pathway">
    <text evidence="1">Nitrogen metabolism; urea degradation; CO(2) and NH(3) from urea (urease route): step 1/1.</text>
</comment>
<comment type="subunit">
    <text evidence="1">Heterotrimer of UreA (gamma), UreB (beta) and UreC (alpha) subunits. Three heterotrimers associate to form the active enzyme.</text>
</comment>
<comment type="subcellular location">
    <subcellularLocation>
        <location evidence="1">Cytoplasm</location>
    </subcellularLocation>
</comment>
<comment type="PTM">
    <text evidence="1">Carboxylation allows a single lysine to coordinate two nickel ions.</text>
</comment>
<comment type="similarity">
    <text evidence="1">Belongs to the metallo-dependent hydrolases superfamily. Urease alpha subunit family.</text>
</comment>
<evidence type="ECO:0000255" key="1">
    <source>
        <dbReference type="HAMAP-Rule" id="MF_01953"/>
    </source>
</evidence>